<sequence length="523" mass="59002">MEKRWLNSMLSKGELEYRCRLSKSINSLGPIESEGSIINNMNKNIPSHSDSYNSSYSTVDDLVGIRNFVSDDTFLVRDSNSSSYSIYLDIENQIFEIDNDPSFVSELESSFYSFRNSTYQNNISKNDDSHYDRYMYDTKYSWNNHINSCIDSYLRTQICIDSYILSGSHNYSDSYIYSYICGEGGNSSESESFSIRTSTHGNNLTITESSNDLDNDRTTNYSDFWVICENCHKFNYKRLFKSKMNICEECGYHLKMNSSDRIELLIDPGTWEPMDEDMVSVDPIEWDSEVDPIQWKSQVDPIEGDSEVDLIEGDSEEYKDSSYKDRISSSQIETGLPEAIQTGTGKLNGIPVAIGVMEFEFMGGSMGSVVGEKITRLIDYASNQFLPLILVCASGGARMQEGSLSLMQMAKISSALYDYKYQSNKKLFYVAILTSPTTGGVTASFAMLGDIIIAEPNAYIAFAGKRIIEETLKMEVPEGSQKTEPLFEKGLLDLIVPRNPLKDVVSELFQLHAFVPSNQNSIK</sequence>
<dbReference type="EC" id="2.1.3.15" evidence="2"/>
<dbReference type="EMBL" id="DQ119058">
    <property type="protein sequence ID" value="AAZ94660.1"/>
    <property type="molecule type" value="Genomic_DNA"/>
</dbReference>
<dbReference type="EMBL" id="AJ970307">
    <property type="protein sequence ID" value="CAJ00767.1"/>
    <property type="molecule type" value="Genomic_DNA"/>
</dbReference>
<dbReference type="EMBL" id="DQ865975">
    <property type="protein sequence ID" value="ABI97426.1"/>
    <property type="molecule type" value="Genomic_DNA"/>
</dbReference>
<dbReference type="EMBL" id="DQ865976">
    <property type="protein sequence ID" value="ABI98754.1"/>
    <property type="molecule type" value="Genomic_DNA"/>
</dbReference>
<dbReference type="RefSeq" id="YP_247608.1">
    <property type="nucleotide sequence ID" value="NC_007144.1"/>
</dbReference>
<dbReference type="SMR" id="Q2QD80"/>
<dbReference type="GeneID" id="3429373"/>
<dbReference type="KEGG" id="csv:3429373"/>
<dbReference type="OrthoDB" id="1927748at2759"/>
<dbReference type="UniPathway" id="UPA00655">
    <property type="reaction ID" value="UER00711"/>
</dbReference>
<dbReference type="GO" id="GO:0009317">
    <property type="term" value="C:acetyl-CoA carboxylase complex"/>
    <property type="evidence" value="ECO:0007669"/>
    <property type="project" value="InterPro"/>
</dbReference>
<dbReference type="GO" id="GO:0009570">
    <property type="term" value="C:chloroplast stroma"/>
    <property type="evidence" value="ECO:0007669"/>
    <property type="project" value="UniProtKB-SubCell"/>
</dbReference>
<dbReference type="GO" id="GO:0003989">
    <property type="term" value="F:acetyl-CoA carboxylase activity"/>
    <property type="evidence" value="ECO:0007669"/>
    <property type="project" value="InterPro"/>
</dbReference>
<dbReference type="GO" id="GO:0005524">
    <property type="term" value="F:ATP binding"/>
    <property type="evidence" value="ECO:0007669"/>
    <property type="project" value="UniProtKB-KW"/>
</dbReference>
<dbReference type="GO" id="GO:0016743">
    <property type="term" value="F:carboxyl- or carbamoyltransferase activity"/>
    <property type="evidence" value="ECO:0007669"/>
    <property type="project" value="UniProtKB-UniRule"/>
</dbReference>
<dbReference type="GO" id="GO:0008270">
    <property type="term" value="F:zinc ion binding"/>
    <property type="evidence" value="ECO:0007669"/>
    <property type="project" value="UniProtKB-UniRule"/>
</dbReference>
<dbReference type="GO" id="GO:0006633">
    <property type="term" value="P:fatty acid biosynthetic process"/>
    <property type="evidence" value="ECO:0007669"/>
    <property type="project" value="UniProtKB-KW"/>
</dbReference>
<dbReference type="GO" id="GO:2001295">
    <property type="term" value="P:malonyl-CoA biosynthetic process"/>
    <property type="evidence" value="ECO:0007669"/>
    <property type="project" value="UniProtKB-UniRule"/>
</dbReference>
<dbReference type="Gene3D" id="3.90.226.10">
    <property type="entry name" value="2-enoyl-CoA Hydratase, Chain A, domain 1"/>
    <property type="match status" value="1"/>
</dbReference>
<dbReference type="HAMAP" id="MF_01395">
    <property type="entry name" value="AcetylCoA_CT_beta"/>
    <property type="match status" value="1"/>
</dbReference>
<dbReference type="InterPro" id="IPR034733">
    <property type="entry name" value="AcCoA_carboxyl_beta"/>
</dbReference>
<dbReference type="InterPro" id="IPR000438">
    <property type="entry name" value="Acetyl_CoA_COase_Trfase_b_su"/>
</dbReference>
<dbReference type="InterPro" id="IPR029045">
    <property type="entry name" value="ClpP/crotonase-like_dom_sf"/>
</dbReference>
<dbReference type="InterPro" id="IPR011762">
    <property type="entry name" value="COA_CT_N"/>
</dbReference>
<dbReference type="PANTHER" id="PTHR42995">
    <property type="entry name" value="ACETYL-COENZYME A CARBOXYLASE CARBOXYL TRANSFERASE SUBUNIT BETA, CHLOROPLASTIC"/>
    <property type="match status" value="1"/>
</dbReference>
<dbReference type="PANTHER" id="PTHR42995:SF5">
    <property type="entry name" value="ACETYL-COENZYME A CARBOXYLASE CARBOXYL TRANSFERASE SUBUNIT BETA, CHLOROPLASTIC"/>
    <property type="match status" value="1"/>
</dbReference>
<dbReference type="Pfam" id="PF01039">
    <property type="entry name" value="Carboxyl_trans"/>
    <property type="match status" value="1"/>
</dbReference>
<dbReference type="PRINTS" id="PR01070">
    <property type="entry name" value="ACCCTRFRASEB"/>
</dbReference>
<dbReference type="SUPFAM" id="SSF52096">
    <property type="entry name" value="ClpP/crotonase"/>
    <property type="match status" value="1"/>
</dbReference>
<dbReference type="PROSITE" id="PS50980">
    <property type="entry name" value="COA_CT_NTER"/>
    <property type="match status" value="1"/>
</dbReference>
<comment type="function">
    <text evidence="2">Component of the acetyl coenzyme A carboxylase (ACC) complex. Biotin carboxylase (BC) catalyzes the carboxylation of biotin on its carrier protein (BCCP) and then the CO(2) group is transferred by the transcarboxylase to acetyl-CoA to form malonyl-CoA.</text>
</comment>
<comment type="catalytic activity">
    <reaction evidence="2">
        <text>N(6)-carboxybiotinyl-L-lysyl-[protein] + acetyl-CoA = N(6)-biotinyl-L-lysyl-[protein] + malonyl-CoA</text>
        <dbReference type="Rhea" id="RHEA:54728"/>
        <dbReference type="Rhea" id="RHEA-COMP:10505"/>
        <dbReference type="Rhea" id="RHEA-COMP:10506"/>
        <dbReference type="ChEBI" id="CHEBI:57288"/>
        <dbReference type="ChEBI" id="CHEBI:57384"/>
        <dbReference type="ChEBI" id="CHEBI:83144"/>
        <dbReference type="ChEBI" id="CHEBI:83145"/>
        <dbReference type="EC" id="2.1.3.15"/>
    </reaction>
</comment>
<comment type="cofactor">
    <cofactor evidence="2">
        <name>Zn(2+)</name>
        <dbReference type="ChEBI" id="CHEBI:29105"/>
    </cofactor>
    <text evidence="2">Binds 1 zinc ion per subunit.</text>
</comment>
<comment type="pathway">
    <text evidence="2">Lipid metabolism; malonyl-CoA biosynthesis; malonyl-CoA from acetyl-CoA: step 1/1.</text>
</comment>
<comment type="subunit">
    <text evidence="1">Acetyl-CoA carboxylase is a heterohexamer composed of biotin carboxyl carrier protein, biotin carboxylase and 2 subunits each of ACCase subunit alpha and ACCase plastid-coded subunit beta (accD).</text>
</comment>
<comment type="subcellular location">
    <subcellularLocation>
        <location evidence="2">Plastid</location>
        <location evidence="2">Chloroplast stroma</location>
    </subcellularLocation>
</comment>
<comment type="miscellaneous">
    <text>The sequence shown is from cv. Gy14/Chipper.</text>
</comment>
<comment type="similarity">
    <text evidence="2">Belongs to the AccD/PCCB family.</text>
</comment>
<name>ACCD_CUCSA</name>
<feature type="chain" id="PRO_0000298913" description="Acetyl-coenzyme A carboxylase carboxyl transferase subunit beta, chloroplastic">
    <location>
        <begin position="1"/>
        <end position="523"/>
    </location>
</feature>
<feature type="domain" description="CoA carboxyltransferase N-terminal" evidence="3">
    <location>
        <begin position="224"/>
        <end position="523"/>
    </location>
</feature>
<feature type="zinc finger region" description="C4-type" evidence="2">
    <location>
        <begin position="228"/>
        <end position="250"/>
    </location>
</feature>
<feature type="binding site" evidence="2">
    <location>
        <position position="228"/>
    </location>
    <ligand>
        <name>Zn(2+)</name>
        <dbReference type="ChEBI" id="CHEBI:29105"/>
    </ligand>
</feature>
<feature type="binding site" evidence="2">
    <location>
        <position position="231"/>
    </location>
    <ligand>
        <name>Zn(2+)</name>
        <dbReference type="ChEBI" id="CHEBI:29105"/>
    </ligand>
</feature>
<feature type="binding site" evidence="2">
    <location>
        <position position="247"/>
    </location>
    <ligand>
        <name>Zn(2+)</name>
        <dbReference type="ChEBI" id="CHEBI:29105"/>
    </ligand>
</feature>
<feature type="binding site" evidence="2">
    <location>
        <position position="250"/>
    </location>
    <ligand>
        <name>Zn(2+)</name>
        <dbReference type="ChEBI" id="CHEBI:29105"/>
    </ligand>
</feature>
<feature type="sequence variant" description="In strain: cv. Baekmibaekdadagi.">
    <original>D</original>
    <variation>Y</variation>
    <location>
        <position position="71"/>
    </location>
</feature>
<feature type="sequence variant" description="In strain: cv. Baekmibaekdadagi.">
    <original>STYQ</original>
    <variation>YKYR</variation>
    <location>
        <begin position="117"/>
        <end position="120"/>
    </location>
</feature>
<feature type="sequence conflict" description="In Ref. 2; CAJ00767." evidence="4" ref="2">
    <original>EPMDEDMVSVDPI</original>
    <variation>DALWYVQTWSLWIPY</variation>
    <location>
        <begin position="272"/>
        <end position="284"/>
    </location>
</feature>
<protein>
    <recommendedName>
        <fullName evidence="2">Acetyl-coenzyme A carboxylase carboxyl transferase subunit beta, chloroplastic</fullName>
        <shortName evidence="2">ACCase subunit beta</shortName>
        <shortName evidence="2">Acetyl-CoA carboxylase carboxyltransferase subunit beta</shortName>
        <ecNumber evidence="2">2.1.3.15</ecNumber>
    </recommendedName>
</protein>
<keyword id="KW-0067">ATP-binding</keyword>
<keyword id="KW-0150">Chloroplast</keyword>
<keyword id="KW-0275">Fatty acid biosynthesis</keyword>
<keyword id="KW-0276">Fatty acid metabolism</keyword>
<keyword id="KW-0444">Lipid biosynthesis</keyword>
<keyword id="KW-0443">Lipid metabolism</keyword>
<keyword id="KW-0479">Metal-binding</keyword>
<keyword id="KW-0547">Nucleotide-binding</keyword>
<keyword id="KW-0934">Plastid</keyword>
<keyword id="KW-0808">Transferase</keyword>
<keyword id="KW-0862">Zinc</keyword>
<keyword id="KW-0863">Zinc-finger</keyword>
<evidence type="ECO:0000250" key="1"/>
<evidence type="ECO:0000255" key="2">
    <source>
        <dbReference type="HAMAP-Rule" id="MF_01395"/>
    </source>
</evidence>
<evidence type="ECO:0000255" key="3">
    <source>
        <dbReference type="PROSITE-ProRule" id="PRU01136"/>
    </source>
</evidence>
<evidence type="ECO:0000305" key="4"/>
<organism>
    <name type="scientific">Cucumis sativus</name>
    <name type="common">Cucumber</name>
    <dbReference type="NCBI Taxonomy" id="3659"/>
    <lineage>
        <taxon>Eukaryota</taxon>
        <taxon>Viridiplantae</taxon>
        <taxon>Streptophyta</taxon>
        <taxon>Embryophyta</taxon>
        <taxon>Tracheophyta</taxon>
        <taxon>Spermatophyta</taxon>
        <taxon>Magnoliopsida</taxon>
        <taxon>eudicotyledons</taxon>
        <taxon>Gunneridae</taxon>
        <taxon>Pentapetalae</taxon>
        <taxon>rosids</taxon>
        <taxon>fabids</taxon>
        <taxon>Cucurbitales</taxon>
        <taxon>Cucurbitaceae</taxon>
        <taxon>Benincaseae</taxon>
        <taxon>Cucumis</taxon>
    </lineage>
</organism>
<proteinExistence type="inferred from homology"/>
<reference key="1">
    <citation type="journal article" date="2006" name="Plant Cell Rep.">
        <title>Complete sequence and organization of the cucumber (Cucumis sativus L. cv. Baekmibaekdadagi) chloroplast genome.</title>
        <authorList>
            <person name="Kim J.-S."/>
            <person name="Jung J.D."/>
            <person name="Lee J.-A."/>
            <person name="Park H.-W."/>
            <person name="Oh K.-H."/>
            <person name="Jeong W.J."/>
            <person name="Choi D.-W."/>
            <person name="Liu J.R."/>
            <person name="Cho K.Y."/>
        </authorList>
    </citation>
    <scope>NUCLEOTIDE SEQUENCE [LARGE SCALE GENOMIC DNA]</scope>
    <source>
        <strain>cv. Baekmibaekdadagi</strain>
    </source>
</reference>
<reference key="2">
    <citation type="journal article" date="2007" name="Cell. Mol. Biol. Lett.">
        <title>The complete structure of the cucumber (Cucumis sativus L.) chloroplast genome: its composition and comparative analysis.</title>
        <authorList>
            <person name="Plader W.W."/>
            <person name="Yukawa Y."/>
            <person name="Sugiura M."/>
            <person name="Malepszy S."/>
        </authorList>
    </citation>
    <scope>NUCLEOTIDE SEQUENCE [LARGE SCALE GENOMIC DNA]</scope>
    <source>
        <strain>cv. Borszczagowski</strain>
    </source>
</reference>
<reference key="3">
    <citation type="journal article" date="2007" name="Genome">
        <title>Sequencing cucumber (Cucumis sativus L.) chloroplast genomes identifies differences between chilling-tolerant and -susceptible cucumber lines.</title>
        <authorList>
            <person name="Chung S.-M."/>
            <person name="Gordon V.S."/>
            <person name="Staub J.E."/>
        </authorList>
    </citation>
    <scope>NUCLEOTIDE SEQUENCE [LARGE SCALE GENOMIC DNA]</scope>
    <scope>VARIANTS</scope>
    <source>
        <strain>cv. Chipper</strain>
        <strain>cv. Gy14</strain>
    </source>
</reference>
<gene>
    <name evidence="2" type="primary">accD</name>
    <name type="ordered locus">CsCp049</name>
</gene>
<geneLocation type="chloroplast"/>
<accession>Q2QD80</accession>
<accession>A5J1U3</accession>
<accession>Q4VZI3</accession>